<evidence type="ECO:0000250" key="1"/>
<evidence type="ECO:0000255" key="2">
    <source>
        <dbReference type="HAMAP-Rule" id="MF_03125"/>
    </source>
</evidence>
<name>PURA_PLAF7</name>
<sequence>MNIFDHQIKNVDKGNVVAILGAQWGDEGKGKIIDMLSEYSDITCRFNGGANAGHTISVNDKKYALHLLPCGVLYDNNISVLGNGMVIHVKSLMEEIESVGGKLLDRLYLSNKAHILFDIHQIIDSIQETKKLKEGKQIGTTKRGIGPCYSTKASRIGIRLGTLKNFENFKNMYSKLIDHLMDLYNITEYDKEKELNLFYNYHLKLRDRIVDVISFMNTNLENNKKVLIEGANAAMLDIDFGTYPYVTSSCTTVGGVFSGLGIHHKKLNLVVGVVKSYLTRVGCGPFLTELNNDVGQYLREKGHEYGTTTKRPRRCGWLDIPMLLYVKCINSIDMINLTKLDVLSGLEEILLCVNFKNKKTGELLEKGCYPVEEEISEEYEPVYEKFSGWKEDISTCNEFDELPENAKKYILAIEKYLKTPIVWIGVGPNRKNMIVKKNFNLN</sequence>
<dbReference type="EC" id="6.3.4.4" evidence="2"/>
<dbReference type="EMBL" id="AL844509">
    <property type="protein sequence ID" value="CAD52666.1"/>
    <property type="molecule type" value="Genomic_DNA"/>
</dbReference>
<dbReference type="RefSeq" id="XP_001350257.1">
    <property type="nucleotide sequence ID" value="XM_001350221.1"/>
</dbReference>
<dbReference type="SMR" id="Q8IDF6"/>
<dbReference type="FunCoup" id="Q8IDF6">
    <property type="interactions" value="348"/>
</dbReference>
<dbReference type="STRING" id="36329.Q8IDF6"/>
<dbReference type="PaxDb" id="5833-PF13_0287"/>
<dbReference type="EnsemblProtists" id="CAD52666">
    <property type="protein sequence ID" value="CAD52666"/>
    <property type="gene ID" value="PF3D7_1354500"/>
</dbReference>
<dbReference type="KEGG" id="pfa:PF3D7_1354500"/>
<dbReference type="VEuPathDB" id="PlasmoDB:PF3D7_1354500"/>
<dbReference type="HOGENOM" id="CLU_029848_0_0_1"/>
<dbReference type="InParanoid" id="Q8IDF6"/>
<dbReference type="OMA" id="FHHAKPI"/>
<dbReference type="OrthoDB" id="10265645at2759"/>
<dbReference type="PhylomeDB" id="Q8IDF6"/>
<dbReference type="Reactome" id="R-PFA-73817">
    <property type="pathway name" value="Purine ribonucleoside monophosphate biosynthesis"/>
</dbReference>
<dbReference type="UniPathway" id="UPA00075">
    <property type="reaction ID" value="UER00335"/>
</dbReference>
<dbReference type="Proteomes" id="UP000001450">
    <property type="component" value="Chromosome 13"/>
</dbReference>
<dbReference type="GO" id="GO:0005737">
    <property type="term" value="C:cytoplasm"/>
    <property type="evidence" value="ECO:0000318"/>
    <property type="project" value="GO_Central"/>
</dbReference>
<dbReference type="GO" id="GO:0004019">
    <property type="term" value="F:adenylosuccinate synthase activity"/>
    <property type="evidence" value="ECO:0000250"/>
    <property type="project" value="GeneDB"/>
</dbReference>
<dbReference type="GO" id="GO:0005525">
    <property type="term" value="F:GTP binding"/>
    <property type="evidence" value="ECO:0000250"/>
    <property type="project" value="GeneDB"/>
</dbReference>
<dbReference type="GO" id="GO:0000287">
    <property type="term" value="F:magnesium ion binding"/>
    <property type="evidence" value="ECO:0007669"/>
    <property type="project" value="UniProtKB-UniRule"/>
</dbReference>
<dbReference type="GO" id="GO:0044208">
    <property type="term" value="P:'de novo' AMP biosynthetic process"/>
    <property type="evidence" value="ECO:0000318"/>
    <property type="project" value="GO_Central"/>
</dbReference>
<dbReference type="GO" id="GO:0006167">
    <property type="term" value="P:AMP biosynthetic process"/>
    <property type="evidence" value="ECO:0000250"/>
    <property type="project" value="GeneDB"/>
</dbReference>
<dbReference type="GO" id="GO:0046040">
    <property type="term" value="P:IMP metabolic process"/>
    <property type="evidence" value="ECO:0000318"/>
    <property type="project" value="GO_Central"/>
</dbReference>
<dbReference type="GO" id="GO:0006164">
    <property type="term" value="P:purine nucleotide biosynthetic process"/>
    <property type="evidence" value="ECO:0000250"/>
    <property type="project" value="GeneDB"/>
</dbReference>
<dbReference type="CDD" id="cd03108">
    <property type="entry name" value="AdSS"/>
    <property type="match status" value="1"/>
</dbReference>
<dbReference type="FunFam" id="3.90.170.10:FF:000001">
    <property type="entry name" value="Adenylosuccinate synthetase"/>
    <property type="match status" value="1"/>
</dbReference>
<dbReference type="Gene3D" id="3.40.440.10">
    <property type="entry name" value="Adenylosuccinate Synthetase, subunit A, domain 1"/>
    <property type="match status" value="1"/>
</dbReference>
<dbReference type="Gene3D" id="1.10.300.10">
    <property type="entry name" value="Adenylosuccinate Synthetase, subunit A, domain 2"/>
    <property type="match status" value="1"/>
</dbReference>
<dbReference type="Gene3D" id="3.90.170.10">
    <property type="entry name" value="Adenylosuccinate Synthetase, subunit A, domain 3"/>
    <property type="match status" value="1"/>
</dbReference>
<dbReference type="HAMAP" id="MF_00011">
    <property type="entry name" value="Adenylosucc_synth"/>
    <property type="match status" value="1"/>
</dbReference>
<dbReference type="InterPro" id="IPR018220">
    <property type="entry name" value="Adenylosuccin_syn_GTP-bd"/>
</dbReference>
<dbReference type="InterPro" id="IPR033128">
    <property type="entry name" value="Adenylosuccin_syn_Lys_AS"/>
</dbReference>
<dbReference type="InterPro" id="IPR042109">
    <property type="entry name" value="Adenylosuccinate_synth_dom1"/>
</dbReference>
<dbReference type="InterPro" id="IPR042110">
    <property type="entry name" value="Adenylosuccinate_synth_dom2"/>
</dbReference>
<dbReference type="InterPro" id="IPR042111">
    <property type="entry name" value="Adenylosuccinate_synth_dom3"/>
</dbReference>
<dbReference type="InterPro" id="IPR001114">
    <property type="entry name" value="Adenylosuccinate_synthetase"/>
</dbReference>
<dbReference type="InterPro" id="IPR027417">
    <property type="entry name" value="P-loop_NTPase"/>
</dbReference>
<dbReference type="NCBIfam" id="NF002223">
    <property type="entry name" value="PRK01117.1"/>
    <property type="match status" value="1"/>
</dbReference>
<dbReference type="NCBIfam" id="TIGR00184">
    <property type="entry name" value="purA"/>
    <property type="match status" value="1"/>
</dbReference>
<dbReference type="PANTHER" id="PTHR11846">
    <property type="entry name" value="ADENYLOSUCCINATE SYNTHETASE"/>
    <property type="match status" value="1"/>
</dbReference>
<dbReference type="PANTHER" id="PTHR11846:SF0">
    <property type="entry name" value="ADENYLOSUCCINATE SYNTHETASE"/>
    <property type="match status" value="1"/>
</dbReference>
<dbReference type="Pfam" id="PF00709">
    <property type="entry name" value="Adenylsucc_synt"/>
    <property type="match status" value="1"/>
</dbReference>
<dbReference type="SMART" id="SM00788">
    <property type="entry name" value="Adenylsucc_synt"/>
    <property type="match status" value="1"/>
</dbReference>
<dbReference type="SUPFAM" id="SSF52540">
    <property type="entry name" value="P-loop containing nucleoside triphosphate hydrolases"/>
    <property type="match status" value="1"/>
</dbReference>
<dbReference type="PROSITE" id="PS01266">
    <property type="entry name" value="ADENYLOSUCCIN_SYN_1"/>
    <property type="match status" value="1"/>
</dbReference>
<dbReference type="PROSITE" id="PS00513">
    <property type="entry name" value="ADENYLOSUCCIN_SYN_2"/>
    <property type="match status" value="1"/>
</dbReference>
<keyword id="KW-0963">Cytoplasm</keyword>
<keyword id="KW-0342">GTP-binding</keyword>
<keyword id="KW-0436">Ligase</keyword>
<keyword id="KW-0460">Magnesium</keyword>
<keyword id="KW-0479">Metal-binding</keyword>
<keyword id="KW-0547">Nucleotide-binding</keyword>
<keyword id="KW-0658">Purine biosynthesis</keyword>
<keyword id="KW-1185">Reference proteome</keyword>
<comment type="function">
    <text evidence="1">Plays an important role in the salvage pathway for purine nucleotide biosynthesis. Catalyzes the first committed step in the biosynthesis of AMP from IMP (By similarity).</text>
</comment>
<comment type="catalytic activity">
    <reaction evidence="2">
        <text>IMP + L-aspartate + GTP = N(6)-(1,2-dicarboxyethyl)-AMP + GDP + phosphate + 2 H(+)</text>
        <dbReference type="Rhea" id="RHEA:15753"/>
        <dbReference type="ChEBI" id="CHEBI:15378"/>
        <dbReference type="ChEBI" id="CHEBI:29991"/>
        <dbReference type="ChEBI" id="CHEBI:37565"/>
        <dbReference type="ChEBI" id="CHEBI:43474"/>
        <dbReference type="ChEBI" id="CHEBI:57567"/>
        <dbReference type="ChEBI" id="CHEBI:58053"/>
        <dbReference type="ChEBI" id="CHEBI:58189"/>
        <dbReference type="EC" id="6.3.4.4"/>
    </reaction>
</comment>
<comment type="cofactor">
    <cofactor evidence="2">
        <name>Mg(2+)</name>
        <dbReference type="ChEBI" id="CHEBI:18420"/>
    </cofactor>
    <text evidence="2">Binds 1 Mg(2+) ion per subunit.</text>
</comment>
<comment type="pathway">
    <text evidence="2">Purine metabolism; AMP biosynthesis via de novo pathway; AMP from IMP: step 1/2.</text>
</comment>
<comment type="subunit">
    <text evidence="2">Homodimer.</text>
</comment>
<comment type="subcellular location">
    <subcellularLocation>
        <location evidence="2">Cytoplasm</location>
    </subcellularLocation>
</comment>
<comment type="miscellaneous">
    <text>Parasitic protozoa lack the de novo purine biosynthesis pathway and rely exclusively on the salvage pathway for their purine nucleotide requirements.</text>
</comment>
<comment type="similarity">
    <text evidence="2">Belongs to the adenylosuccinate synthetase family.</text>
</comment>
<accession>Q8IDF6</accession>
<proteinExistence type="inferred from homology"/>
<gene>
    <name type="primary">Adss</name>
    <name type="ORF">PF13_0287</name>
</gene>
<feature type="chain" id="PRO_0000399293" description="Adenylosuccinate synthetase">
    <location>
        <begin position="1"/>
        <end position="442"/>
    </location>
</feature>
<feature type="active site" description="Proton acceptor" evidence="2">
    <location>
        <position position="26"/>
    </location>
</feature>
<feature type="active site" description="Proton donor" evidence="2">
    <location>
        <position position="54"/>
    </location>
</feature>
<feature type="binding site" evidence="2">
    <location>
        <begin position="25"/>
        <end position="31"/>
    </location>
    <ligand>
        <name>GTP</name>
        <dbReference type="ChEBI" id="CHEBI:37565"/>
    </ligand>
</feature>
<feature type="binding site" description="in other chain" evidence="2">
    <location>
        <begin position="26"/>
        <end position="29"/>
    </location>
    <ligand>
        <name>IMP</name>
        <dbReference type="ChEBI" id="CHEBI:58053"/>
        <note>ligand shared between dimeric partners</note>
    </ligand>
</feature>
<feature type="binding site" evidence="2">
    <location>
        <position position="26"/>
    </location>
    <ligand>
        <name>Mg(2+)</name>
        <dbReference type="ChEBI" id="CHEBI:18420"/>
    </ligand>
</feature>
<feature type="binding site" description="in other chain" evidence="2">
    <location>
        <begin position="51"/>
        <end position="54"/>
    </location>
    <ligand>
        <name>IMP</name>
        <dbReference type="ChEBI" id="CHEBI:58053"/>
        <note>ligand shared between dimeric partners</note>
    </ligand>
</feature>
<feature type="binding site" evidence="2">
    <location>
        <begin position="53"/>
        <end position="55"/>
    </location>
    <ligand>
        <name>GTP</name>
        <dbReference type="ChEBI" id="CHEBI:37565"/>
    </ligand>
</feature>
<feature type="binding site" evidence="2">
    <location>
        <position position="53"/>
    </location>
    <ligand>
        <name>Mg(2+)</name>
        <dbReference type="ChEBI" id="CHEBI:18420"/>
    </ligand>
</feature>
<feature type="binding site" evidence="2">
    <location>
        <position position="62"/>
    </location>
    <ligand>
        <name>GTP</name>
        <dbReference type="ChEBI" id="CHEBI:37565"/>
    </ligand>
</feature>
<feature type="binding site" description="in other chain" evidence="2">
    <location>
        <position position="141"/>
    </location>
    <ligand>
        <name>IMP</name>
        <dbReference type="ChEBI" id="CHEBI:58053"/>
        <note>ligand shared between dimeric partners</note>
    </ligand>
</feature>
<feature type="binding site" evidence="2">
    <location>
        <position position="155"/>
    </location>
    <ligand>
        <name>IMP</name>
        <dbReference type="ChEBI" id="CHEBI:58053"/>
        <note>ligand shared between dimeric partners</note>
    </ligand>
</feature>
<feature type="binding site" description="in other chain" evidence="2">
    <location>
        <position position="232"/>
    </location>
    <ligand>
        <name>IMP</name>
        <dbReference type="ChEBI" id="CHEBI:58053"/>
        <note>ligand shared between dimeric partners</note>
    </ligand>
</feature>
<feature type="binding site" description="in other chain" evidence="2">
    <location>
        <position position="247"/>
    </location>
    <ligand>
        <name>IMP</name>
        <dbReference type="ChEBI" id="CHEBI:58053"/>
        <note>ligand shared between dimeric partners</note>
    </ligand>
</feature>
<feature type="binding site" evidence="2">
    <location>
        <begin position="307"/>
        <end position="313"/>
    </location>
    <ligand>
        <name>substrate</name>
    </ligand>
</feature>
<feature type="binding site" evidence="2">
    <location>
        <position position="307"/>
    </location>
    <ligand>
        <name>GTP</name>
        <dbReference type="ChEBI" id="CHEBI:37565"/>
    </ligand>
</feature>
<feature type="binding site" description="in other chain" evidence="2">
    <location>
        <position position="311"/>
    </location>
    <ligand>
        <name>IMP</name>
        <dbReference type="ChEBI" id="CHEBI:58053"/>
        <note>ligand shared between dimeric partners</note>
    </ligand>
</feature>
<feature type="binding site" evidence="2">
    <location>
        <position position="313"/>
    </location>
    <ligand>
        <name>GTP</name>
        <dbReference type="ChEBI" id="CHEBI:37565"/>
    </ligand>
</feature>
<feature type="binding site" evidence="2">
    <location>
        <begin position="339"/>
        <end position="341"/>
    </location>
    <ligand>
        <name>GTP</name>
        <dbReference type="ChEBI" id="CHEBI:37565"/>
    </ligand>
</feature>
<feature type="binding site" evidence="2">
    <location>
        <begin position="425"/>
        <end position="427"/>
    </location>
    <ligand>
        <name>GTP</name>
        <dbReference type="ChEBI" id="CHEBI:37565"/>
    </ligand>
</feature>
<protein>
    <recommendedName>
        <fullName evidence="2">Adenylosuccinate synthetase</fullName>
        <shortName evidence="2">AMPSase</shortName>
        <shortName evidence="2">AdSS</shortName>
        <ecNumber evidence="2">6.3.4.4</ecNumber>
    </recommendedName>
    <alternativeName>
        <fullName evidence="2">IMP--aspartate ligase</fullName>
    </alternativeName>
</protein>
<reference key="1">
    <citation type="journal article" date="2002" name="Nature">
        <title>Genome sequence of the human malaria parasite Plasmodium falciparum.</title>
        <authorList>
            <person name="Gardner M.J."/>
            <person name="Hall N."/>
            <person name="Fung E."/>
            <person name="White O."/>
            <person name="Berriman M."/>
            <person name="Hyman R.W."/>
            <person name="Carlton J.M."/>
            <person name="Pain A."/>
            <person name="Nelson K.E."/>
            <person name="Bowman S."/>
            <person name="Paulsen I.T."/>
            <person name="James K.D."/>
            <person name="Eisen J.A."/>
            <person name="Rutherford K.M."/>
            <person name="Salzberg S.L."/>
            <person name="Craig A."/>
            <person name="Kyes S."/>
            <person name="Chan M.-S."/>
            <person name="Nene V."/>
            <person name="Shallom S.J."/>
            <person name="Suh B."/>
            <person name="Peterson J."/>
            <person name="Angiuoli S."/>
            <person name="Pertea M."/>
            <person name="Allen J."/>
            <person name="Selengut J."/>
            <person name="Haft D."/>
            <person name="Mather M.W."/>
            <person name="Vaidya A.B."/>
            <person name="Martin D.M.A."/>
            <person name="Fairlamb A.H."/>
            <person name="Fraunholz M.J."/>
            <person name="Roos D.S."/>
            <person name="Ralph S.A."/>
            <person name="McFadden G.I."/>
            <person name="Cummings L.M."/>
            <person name="Subramanian G.M."/>
            <person name="Mungall C."/>
            <person name="Venter J.C."/>
            <person name="Carucci D.J."/>
            <person name="Hoffman S.L."/>
            <person name="Newbold C."/>
            <person name="Davis R.W."/>
            <person name="Fraser C.M."/>
            <person name="Barrell B.G."/>
        </authorList>
    </citation>
    <scope>NUCLEOTIDE SEQUENCE [LARGE SCALE GENOMIC DNA]</scope>
    <source>
        <strain>3D7</strain>
    </source>
</reference>
<reference key="2">
    <citation type="journal article" date="2002" name="Nature">
        <title>Sequence of Plasmodium falciparum chromosomes 1, 3-9 and 13.</title>
        <authorList>
            <person name="Hall N."/>
            <person name="Pain A."/>
            <person name="Berriman M."/>
            <person name="Churcher C.M."/>
            <person name="Harris B."/>
            <person name="Harris D."/>
            <person name="Mungall K.L."/>
            <person name="Bowman S."/>
            <person name="Atkin R."/>
            <person name="Baker S."/>
            <person name="Barron A."/>
            <person name="Brooks K."/>
            <person name="Buckee C.O."/>
            <person name="Burrows C."/>
            <person name="Cherevach I."/>
            <person name="Chillingworth C."/>
            <person name="Chillingworth T."/>
            <person name="Christodoulou Z."/>
            <person name="Clark L."/>
            <person name="Clark R."/>
            <person name="Corton C."/>
            <person name="Cronin A."/>
            <person name="Davies R.M."/>
            <person name="Davis P."/>
            <person name="Dear P."/>
            <person name="Dearden F."/>
            <person name="Doggett J."/>
            <person name="Feltwell T."/>
            <person name="Goble A."/>
            <person name="Goodhead I."/>
            <person name="Gwilliam R."/>
            <person name="Hamlin N."/>
            <person name="Hance Z."/>
            <person name="Harper D."/>
            <person name="Hauser H."/>
            <person name="Hornsby T."/>
            <person name="Holroyd S."/>
            <person name="Horrocks P."/>
            <person name="Humphray S."/>
            <person name="Jagels K."/>
            <person name="James K.D."/>
            <person name="Johnson D."/>
            <person name="Kerhornou A."/>
            <person name="Knights A."/>
            <person name="Konfortov B."/>
            <person name="Kyes S."/>
            <person name="Larke N."/>
            <person name="Lawson D."/>
            <person name="Lennard N."/>
            <person name="Line A."/>
            <person name="Maddison M."/>
            <person name="Mclean J."/>
            <person name="Mooney P."/>
            <person name="Moule S."/>
            <person name="Murphy L."/>
            <person name="Oliver K."/>
            <person name="Ormond D."/>
            <person name="Price C."/>
            <person name="Quail M.A."/>
            <person name="Rabbinowitsch E."/>
            <person name="Rajandream M.A."/>
            <person name="Rutter S."/>
            <person name="Rutherford K.M."/>
            <person name="Sanders M."/>
            <person name="Simmonds M."/>
            <person name="Seeger K."/>
            <person name="Sharp S."/>
            <person name="Smith R."/>
            <person name="Squares R."/>
            <person name="Squares S."/>
            <person name="Stevens K."/>
            <person name="Taylor K."/>
            <person name="Tivey A."/>
            <person name="Unwin L."/>
            <person name="Whitehead S."/>
            <person name="Woodward J.R."/>
            <person name="Sulston J.E."/>
            <person name="Craig A."/>
            <person name="Newbold C."/>
            <person name="Barrell B.G."/>
        </authorList>
    </citation>
    <scope>NUCLEOTIDE SEQUENCE [LARGE SCALE GENOMIC DNA]</scope>
    <source>
        <strain>3D7</strain>
    </source>
</reference>
<organism>
    <name type="scientific">Plasmodium falciparum (isolate 3D7)</name>
    <dbReference type="NCBI Taxonomy" id="36329"/>
    <lineage>
        <taxon>Eukaryota</taxon>
        <taxon>Sar</taxon>
        <taxon>Alveolata</taxon>
        <taxon>Apicomplexa</taxon>
        <taxon>Aconoidasida</taxon>
        <taxon>Haemosporida</taxon>
        <taxon>Plasmodiidae</taxon>
        <taxon>Plasmodium</taxon>
        <taxon>Plasmodium (Laverania)</taxon>
    </lineage>
</organism>